<gene>
    <name evidence="1" type="primary">hisB</name>
    <name type="ordered locus">Paes_0820</name>
</gene>
<protein>
    <recommendedName>
        <fullName evidence="1">Imidazoleglycerol-phosphate dehydratase</fullName>
        <shortName evidence="1">IGPD</shortName>
        <ecNumber evidence="1">4.2.1.19</ecNumber>
    </recommendedName>
</protein>
<evidence type="ECO:0000255" key="1">
    <source>
        <dbReference type="HAMAP-Rule" id="MF_00076"/>
    </source>
</evidence>
<feature type="chain" id="PRO_1000092708" description="Imidazoleglycerol-phosphate dehydratase">
    <location>
        <begin position="1"/>
        <end position="200"/>
    </location>
</feature>
<proteinExistence type="inferred from homology"/>
<reference key="1">
    <citation type="submission" date="2008-06" db="EMBL/GenBank/DDBJ databases">
        <title>Complete sequence of chromosome of Prosthecochloris aestuarii DSM 271.</title>
        <authorList>
            <consortium name="US DOE Joint Genome Institute"/>
            <person name="Lucas S."/>
            <person name="Copeland A."/>
            <person name="Lapidus A."/>
            <person name="Glavina del Rio T."/>
            <person name="Dalin E."/>
            <person name="Tice H."/>
            <person name="Bruce D."/>
            <person name="Goodwin L."/>
            <person name="Pitluck S."/>
            <person name="Schmutz J."/>
            <person name="Larimer F."/>
            <person name="Land M."/>
            <person name="Hauser L."/>
            <person name="Kyrpides N."/>
            <person name="Anderson I."/>
            <person name="Liu Z."/>
            <person name="Li T."/>
            <person name="Zhao F."/>
            <person name="Overmann J."/>
            <person name="Bryant D.A."/>
            <person name="Richardson P."/>
        </authorList>
    </citation>
    <scope>NUCLEOTIDE SEQUENCE [LARGE SCALE GENOMIC DNA]</scope>
    <source>
        <strain>DSM 271 / SK 413</strain>
    </source>
</reference>
<organism>
    <name type="scientific">Prosthecochloris aestuarii (strain DSM 271 / SK 413)</name>
    <dbReference type="NCBI Taxonomy" id="290512"/>
    <lineage>
        <taxon>Bacteria</taxon>
        <taxon>Pseudomonadati</taxon>
        <taxon>Chlorobiota</taxon>
        <taxon>Chlorobiia</taxon>
        <taxon>Chlorobiales</taxon>
        <taxon>Chlorobiaceae</taxon>
        <taxon>Prosthecochloris</taxon>
    </lineage>
</organism>
<name>HIS7_PROA2</name>
<keyword id="KW-0028">Amino-acid biosynthesis</keyword>
<keyword id="KW-0963">Cytoplasm</keyword>
<keyword id="KW-0368">Histidine biosynthesis</keyword>
<keyword id="KW-0456">Lyase</keyword>
<dbReference type="EC" id="4.2.1.19" evidence="1"/>
<dbReference type="EMBL" id="CP001108">
    <property type="protein sequence ID" value="ACF45866.1"/>
    <property type="molecule type" value="Genomic_DNA"/>
</dbReference>
<dbReference type="RefSeq" id="WP_012505403.1">
    <property type="nucleotide sequence ID" value="NC_011059.1"/>
</dbReference>
<dbReference type="SMR" id="B4S729"/>
<dbReference type="STRING" id="290512.Paes_0820"/>
<dbReference type="KEGG" id="paa:Paes_0820"/>
<dbReference type="eggNOG" id="COG0131">
    <property type="taxonomic scope" value="Bacteria"/>
</dbReference>
<dbReference type="HOGENOM" id="CLU_044308_3_0_10"/>
<dbReference type="UniPathway" id="UPA00031">
    <property type="reaction ID" value="UER00011"/>
</dbReference>
<dbReference type="Proteomes" id="UP000002725">
    <property type="component" value="Chromosome"/>
</dbReference>
<dbReference type="GO" id="GO:0005737">
    <property type="term" value="C:cytoplasm"/>
    <property type="evidence" value="ECO:0007669"/>
    <property type="project" value="UniProtKB-SubCell"/>
</dbReference>
<dbReference type="GO" id="GO:0004424">
    <property type="term" value="F:imidazoleglycerol-phosphate dehydratase activity"/>
    <property type="evidence" value="ECO:0007669"/>
    <property type="project" value="UniProtKB-UniRule"/>
</dbReference>
<dbReference type="GO" id="GO:0000105">
    <property type="term" value="P:L-histidine biosynthetic process"/>
    <property type="evidence" value="ECO:0007669"/>
    <property type="project" value="UniProtKB-UniRule"/>
</dbReference>
<dbReference type="CDD" id="cd07914">
    <property type="entry name" value="IGPD"/>
    <property type="match status" value="1"/>
</dbReference>
<dbReference type="FunFam" id="3.30.230.40:FF:000001">
    <property type="entry name" value="Imidazoleglycerol-phosphate dehydratase HisB"/>
    <property type="match status" value="1"/>
</dbReference>
<dbReference type="FunFam" id="3.30.230.40:FF:000003">
    <property type="entry name" value="Imidazoleglycerol-phosphate dehydratase HisB"/>
    <property type="match status" value="1"/>
</dbReference>
<dbReference type="Gene3D" id="3.30.230.40">
    <property type="entry name" value="Imidazole glycerol phosphate dehydratase, domain 1"/>
    <property type="match status" value="2"/>
</dbReference>
<dbReference type="HAMAP" id="MF_00076">
    <property type="entry name" value="HisB"/>
    <property type="match status" value="1"/>
</dbReference>
<dbReference type="InterPro" id="IPR038494">
    <property type="entry name" value="IGPD_sf"/>
</dbReference>
<dbReference type="InterPro" id="IPR000807">
    <property type="entry name" value="ImidazoleglycerolP_deHydtase"/>
</dbReference>
<dbReference type="InterPro" id="IPR020565">
    <property type="entry name" value="ImidazoleglycerP_deHydtase_CS"/>
</dbReference>
<dbReference type="InterPro" id="IPR020568">
    <property type="entry name" value="Ribosomal_Su5_D2-typ_SF"/>
</dbReference>
<dbReference type="NCBIfam" id="NF002111">
    <property type="entry name" value="PRK00951.2-1"/>
    <property type="match status" value="1"/>
</dbReference>
<dbReference type="NCBIfam" id="NF002114">
    <property type="entry name" value="PRK00951.2-4"/>
    <property type="match status" value="1"/>
</dbReference>
<dbReference type="PANTHER" id="PTHR23133:SF2">
    <property type="entry name" value="IMIDAZOLEGLYCEROL-PHOSPHATE DEHYDRATASE"/>
    <property type="match status" value="1"/>
</dbReference>
<dbReference type="PANTHER" id="PTHR23133">
    <property type="entry name" value="IMIDAZOLEGLYCEROL-PHOSPHATE DEHYDRATASE HIS7"/>
    <property type="match status" value="1"/>
</dbReference>
<dbReference type="Pfam" id="PF00475">
    <property type="entry name" value="IGPD"/>
    <property type="match status" value="1"/>
</dbReference>
<dbReference type="SUPFAM" id="SSF54211">
    <property type="entry name" value="Ribosomal protein S5 domain 2-like"/>
    <property type="match status" value="2"/>
</dbReference>
<dbReference type="PROSITE" id="PS00954">
    <property type="entry name" value="IGP_DEHYDRATASE_1"/>
    <property type="match status" value="1"/>
</dbReference>
<dbReference type="PROSITE" id="PS00955">
    <property type="entry name" value="IGP_DEHYDRATASE_2"/>
    <property type="match status" value="1"/>
</dbReference>
<sequence>MSQPDNHSSRSASVSRRTSETDISIDLNLDGTGTHSISSGVVFLDHMLANFSKHAQIDITLTCKGDTDVDDHHSVEDIALVLGSALLQSLGDKKGIKRYGWSMIPMDEALARCALDLGGRSYSVFNATFNRSVVNGFSTEMVEHFFLSLSRTLHANIHISILEGQNTHHKIEAIFKAFAYALKDAISISGTGIPSTKGVI</sequence>
<comment type="catalytic activity">
    <reaction evidence="1">
        <text>D-erythro-1-(imidazol-4-yl)glycerol 3-phosphate = 3-(imidazol-4-yl)-2-oxopropyl phosphate + H2O</text>
        <dbReference type="Rhea" id="RHEA:11040"/>
        <dbReference type="ChEBI" id="CHEBI:15377"/>
        <dbReference type="ChEBI" id="CHEBI:57766"/>
        <dbReference type="ChEBI" id="CHEBI:58278"/>
        <dbReference type="EC" id="4.2.1.19"/>
    </reaction>
</comment>
<comment type="pathway">
    <text evidence="1">Amino-acid biosynthesis; L-histidine biosynthesis; L-histidine from 5-phospho-alpha-D-ribose 1-diphosphate: step 6/9.</text>
</comment>
<comment type="subcellular location">
    <subcellularLocation>
        <location evidence="1">Cytoplasm</location>
    </subcellularLocation>
</comment>
<comment type="similarity">
    <text evidence="1">Belongs to the imidazoleglycerol-phosphate dehydratase family.</text>
</comment>
<accession>B4S729</accession>